<accession>Q28C41</accession>
<protein>
    <recommendedName>
        <fullName>Vezatin</fullName>
    </recommendedName>
</protein>
<evidence type="ECO:0000250" key="1"/>
<evidence type="ECO:0000255" key="2"/>
<evidence type="ECO:0000256" key="3">
    <source>
        <dbReference type="SAM" id="MobiDB-lite"/>
    </source>
</evidence>
<evidence type="ECO:0000305" key="4"/>
<comment type="function">
    <text evidence="1">Plays a pivotal role in the establishment of adherens junctions and their maintenance in adult life.</text>
</comment>
<comment type="subunit">
    <text evidence="1">Interacts with myosin VIIa and the cadherin-catenins complex.</text>
</comment>
<comment type="subcellular location">
    <subcellularLocation>
        <location>Cell membrane</location>
        <topology>Multi-pass membrane protein</topology>
    </subcellularLocation>
    <subcellularLocation>
        <location>Cell junction</location>
        <location>Adherens junction</location>
    </subcellularLocation>
    <subcellularLocation>
        <location evidence="1">Nucleus</location>
    </subcellularLocation>
</comment>
<comment type="similarity">
    <text evidence="4">Belongs to the vezatin family.</text>
</comment>
<dbReference type="EMBL" id="CR942466">
    <property type="protein sequence ID" value="CAJ81723.1"/>
    <property type="molecule type" value="mRNA"/>
</dbReference>
<dbReference type="EMBL" id="BC136189">
    <property type="protein sequence ID" value="AAI36190.1"/>
    <property type="molecule type" value="mRNA"/>
</dbReference>
<dbReference type="RefSeq" id="NP_001039208.1">
    <property type="nucleotide sequence ID" value="NM_001045743.1"/>
</dbReference>
<dbReference type="SMR" id="Q28C41"/>
<dbReference type="FunCoup" id="Q28C41">
    <property type="interactions" value="2640"/>
</dbReference>
<dbReference type="STRING" id="8364.ENSXETP00000037730"/>
<dbReference type="PaxDb" id="8364-ENSXETP00000051413"/>
<dbReference type="GeneID" id="734067"/>
<dbReference type="KEGG" id="xtr:734067"/>
<dbReference type="AGR" id="Xenbase:XB-GENE-1015453"/>
<dbReference type="CTD" id="55591"/>
<dbReference type="Xenbase" id="XB-GENE-1015453">
    <property type="gene designation" value="vezt"/>
</dbReference>
<dbReference type="eggNOG" id="ENOG502QTQW">
    <property type="taxonomic scope" value="Eukaryota"/>
</dbReference>
<dbReference type="InParanoid" id="Q28C41"/>
<dbReference type="OMA" id="IVCENPR"/>
<dbReference type="OrthoDB" id="21151at2759"/>
<dbReference type="Proteomes" id="UP000008143">
    <property type="component" value="Chromosome 3"/>
</dbReference>
<dbReference type="Bgee" id="ENSXETG00000023853">
    <property type="expression patterns" value="Expressed in brain and 13 other cell types or tissues"/>
</dbReference>
<dbReference type="ExpressionAtlas" id="Q28C41">
    <property type="expression patterns" value="differential"/>
</dbReference>
<dbReference type="GO" id="GO:0005912">
    <property type="term" value="C:adherens junction"/>
    <property type="evidence" value="ECO:0007669"/>
    <property type="project" value="UniProtKB-SubCell"/>
</dbReference>
<dbReference type="GO" id="GO:0005634">
    <property type="term" value="C:nucleus"/>
    <property type="evidence" value="ECO:0007669"/>
    <property type="project" value="UniProtKB-SubCell"/>
</dbReference>
<dbReference type="GO" id="GO:0005886">
    <property type="term" value="C:plasma membrane"/>
    <property type="evidence" value="ECO:0007669"/>
    <property type="project" value="UniProtKB-SubCell"/>
</dbReference>
<dbReference type="GO" id="GO:0002142">
    <property type="term" value="C:stereocilia ankle link complex"/>
    <property type="evidence" value="ECO:0000250"/>
    <property type="project" value="UniProtKB"/>
</dbReference>
<dbReference type="GO" id="GO:0017022">
    <property type="term" value="F:myosin binding"/>
    <property type="evidence" value="ECO:0007669"/>
    <property type="project" value="InterPro"/>
</dbReference>
<dbReference type="GO" id="GO:0098609">
    <property type="term" value="P:cell-cell adhesion"/>
    <property type="evidence" value="ECO:0007669"/>
    <property type="project" value="InterPro"/>
</dbReference>
<dbReference type="InterPro" id="IPR026859">
    <property type="entry name" value="Myosin-bd"/>
</dbReference>
<dbReference type="InterPro" id="IPR026858">
    <property type="entry name" value="Vezatin"/>
</dbReference>
<dbReference type="PANTHER" id="PTHR15989">
    <property type="entry name" value="VEZATIN"/>
    <property type="match status" value="1"/>
</dbReference>
<dbReference type="PANTHER" id="PTHR15989:SF5">
    <property type="entry name" value="VEZATIN"/>
    <property type="match status" value="1"/>
</dbReference>
<dbReference type="Pfam" id="PF12632">
    <property type="entry name" value="Vezatin"/>
    <property type="match status" value="1"/>
</dbReference>
<gene>
    <name type="primary">vezt</name>
    <name type="ORF">TEgg004g23.1</name>
</gene>
<name>VEZA_XENTR</name>
<keyword id="KW-0965">Cell junction</keyword>
<keyword id="KW-1003">Cell membrane</keyword>
<keyword id="KW-0175">Coiled coil</keyword>
<keyword id="KW-0472">Membrane</keyword>
<keyword id="KW-0539">Nucleus</keyword>
<keyword id="KW-1185">Reference proteome</keyword>
<keyword id="KW-0812">Transmembrane</keyword>
<keyword id="KW-1133">Transmembrane helix</keyword>
<reference key="1">
    <citation type="submission" date="2006-10" db="EMBL/GenBank/DDBJ databases">
        <authorList>
            <consortium name="Sanger Xenopus tropicalis EST/cDNA project"/>
        </authorList>
    </citation>
    <scope>NUCLEOTIDE SEQUENCE [LARGE SCALE MRNA]</scope>
    <source>
        <tissue>Egg</tissue>
    </source>
</reference>
<reference key="2">
    <citation type="submission" date="2007-03" db="EMBL/GenBank/DDBJ databases">
        <authorList>
            <consortium name="NIH - Xenopus Gene Collection (XGC) project"/>
        </authorList>
    </citation>
    <scope>NUCLEOTIDE SEQUENCE [LARGE SCALE MRNA]</scope>
    <source>
        <tissue>Brain</tissue>
    </source>
</reference>
<organism>
    <name type="scientific">Xenopus tropicalis</name>
    <name type="common">Western clawed frog</name>
    <name type="synonym">Silurana tropicalis</name>
    <dbReference type="NCBI Taxonomy" id="8364"/>
    <lineage>
        <taxon>Eukaryota</taxon>
        <taxon>Metazoa</taxon>
        <taxon>Chordata</taxon>
        <taxon>Craniata</taxon>
        <taxon>Vertebrata</taxon>
        <taxon>Euteleostomi</taxon>
        <taxon>Amphibia</taxon>
        <taxon>Batrachia</taxon>
        <taxon>Anura</taxon>
        <taxon>Pipoidea</taxon>
        <taxon>Pipidae</taxon>
        <taxon>Xenopodinae</taxon>
        <taxon>Xenopus</taxon>
        <taxon>Silurana</taxon>
    </lineage>
</organism>
<proteinExistence type="evidence at transcript level"/>
<sequence>MTAEFDEEVVFENSPLFQYLQDLGQTDFEICPLSKEEEHLAGNGHGEQDVHTTEKKSNISRTVEFLKSWSPLFSKKKRDEKICLLENGFRLESLRTILQQEVLIQEDVELIELLDPGILSAGQTQNQQNGHLPTLWSIATPNIWEMSVLFAFLSALAALQSWSISSSLVWGPSLILFAAFTVLRALHTWRSATLRMILRKYCNQVEGTVLNSRAFTNLVRKALRLIQETEVISRGFTLLLDRVSAACPYGKAGQHASQHLLGLRKAVYRTVRTNFRISRLATLYMLKHYPLNSEIDNVTNYICVVPLKDLGLGLCEEHVSEEEAHNLTDAFSLPALKVLFQLWIGQSSEFFRRLALLLSPENAAQGHLASPEQLPHLIWSDVVQDLPHTQAACLAELKRSYEFYRYFETQHQSGFERTAKRKKEVGELSNLHGAVRSLQLHLKALLNEVIILEDELEKLSSCKEMQAMTQEASLMLEEKLRIIQPHVQASNTCWEEALCQVGRMVRRPAAKKDIEKSSCENLNFPVVSNMPPALRIEDRDPVPEEQILEAYVEEAVTDQEFNSEDIYLFSPEERERQKREREESKRVLQELKAVLGLKASEAERQKWKQLLFSEHAVITPFLPEEPVGHFEPPDSVYPEDPCKNLGFYGEFTSEINGTEHAKDTPNQGDLQMNMNHEDEAKICPLSEEAEPESGKDENESPCPVPRTVLPPAIKERLARIHQTSDLNFTSGLAAQVAARSLTFTFLQEQTFGDEWDDDDDDNDNDDDNYDQVKNVESHEKERNNVSLQLEE</sequence>
<feature type="chain" id="PRO_0000349252" description="Vezatin">
    <location>
        <begin position="1"/>
        <end position="791"/>
    </location>
</feature>
<feature type="transmembrane region" description="Helical" evidence="2">
    <location>
        <begin position="138"/>
        <end position="158"/>
    </location>
</feature>
<feature type="transmembrane region" description="Helical" evidence="2">
    <location>
        <begin position="163"/>
        <end position="183"/>
    </location>
</feature>
<feature type="region of interest" description="Disordered" evidence="3">
    <location>
        <begin position="752"/>
        <end position="791"/>
    </location>
</feature>
<feature type="coiled-coil region" evidence="2">
    <location>
        <begin position="435"/>
        <end position="464"/>
    </location>
</feature>
<feature type="compositionally biased region" description="Acidic residues" evidence="3">
    <location>
        <begin position="752"/>
        <end position="769"/>
    </location>
</feature>
<feature type="compositionally biased region" description="Basic and acidic residues" evidence="3">
    <location>
        <begin position="773"/>
        <end position="783"/>
    </location>
</feature>